<organism>
    <name type="scientific">Shewanella denitrificans (strain OS217 / ATCC BAA-1090 / DSM 15013)</name>
    <dbReference type="NCBI Taxonomy" id="318161"/>
    <lineage>
        <taxon>Bacteria</taxon>
        <taxon>Pseudomonadati</taxon>
        <taxon>Pseudomonadota</taxon>
        <taxon>Gammaproteobacteria</taxon>
        <taxon>Alteromonadales</taxon>
        <taxon>Shewanellaceae</taxon>
        <taxon>Shewanella</taxon>
    </lineage>
</organism>
<accession>Q12SP8</accession>
<proteinExistence type="inferred from homology"/>
<sequence>MNLAAMDPSNYDAQLAEKKRKLSEGFAEFAPPELEVFASEPAHYRMRAEFRVWHEGDDLYYYMFDKVLDAKVRCEQYLPASTLINAIMTSLVEELRPNHSLRHRLFQVDFLSTLSGEILVSLLYHRQLDEQWQVEAAALKQRLSSQFNVNIIGRARKQKIDLDKDFVVETIKVNGQDLHYKQIENSFTQPNAKVSIKMLEWAIDATKQSQGDLLELYCGNGNFTIALAQNFNRVLATELAKPSVGAAQYNIAINNVDNVQIIRMSAEDFSDAMAKKRSFRRLEGIDLDSYNCNTIFVDPPRAGIDDETLKLIQGYERILYISCNPETLKDNLQTLSSSHKITRFALFDQFPYTHHMESGVLLERK</sequence>
<evidence type="ECO:0000255" key="1">
    <source>
        <dbReference type="HAMAP-Rule" id="MF_01011"/>
    </source>
</evidence>
<feature type="chain" id="PRO_0000281459" description="tRNA/tmRNA (uracil-C(5))-methyltransferase">
    <location>
        <begin position="1"/>
        <end position="365"/>
    </location>
</feature>
<feature type="active site" description="Nucleophile" evidence="1">
    <location>
        <position position="323"/>
    </location>
</feature>
<feature type="active site" description="Proton acceptor" evidence="1">
    <location>
        <position position="357"/>
    </location>
</feature>
<feature type="binding site" evidence="1">
    <location>
        <position position="189"/>
    </location>
    <ligand>
        <name>S-adenosyl-L-methionine</name>
        <dbReference type="ChEBI" id="CHEBI:59789"/>
    </ligand>
</feature>
<feature type="binding site" evidence="1">
    <location>
        <position position="217"/>
    </location>
    <ligand>
        <name>S-adenosyl-L-methionine</name>
        <dbReference type="ChEBI" id="CHEBI:59789"/>
    </ligand>
</feature>
<feature type="binding site" evidence="1">
    <location>
        <position position="222"/>
    </location>
    <ligand>
        <name>S-adenosyl-L-methionine</name>
        <dbReference type="ChEBI" id="CHEBI:59789"/>
    </ligand>
</feature>
<feature type="binding site" evidence="1">
    <location>
        <position position="238"/>
    </location>
    <ligand>
        <name>S-adenosyl-L-methionine</name>
        <dbReference type="ChEBI" id="CHEBI:59789"/>
    </ligand>
</feature>
<feature type="binding site" evidence="1">
    <location>
        <position position="298"/>
    </location>
    <ligand>
        <name>S-adenosyl-L-methionine</name>
        <dbReference type="ChEBI" id="CHEBI:59789"/>
    </ligand>
</feature>
<dbReference type="EC" id="2.1.1.-" evidence="1"/>
<dbReference type="EC" id="2.1.1.35" evidence="1"/>
<dbReference type="EMBL" id="CP000302">
    <property type="protein sequence ID" value="ABE53528.1"/>
    <property type="molecule type" value="Genomic_DNA"/>
</dbReference>
<dbReference type="RefSeq" id="WP_011494695.1">
    <property type="nucleotide sequence ID" value="NC_007954.1"/>
</dbReference>
<dbReference type="SMR" id="Q12SP8"/>
<dbReference type="STRING" id="318161.Sden_0231"/>
<dbReference type="KEGG" id="sdn:Sden_0231"/>
<dbReference type="eggNOG" id="COG2265">
    <property type="taxonomic scope" value="Bacteria"/>
</dbReference>
<dbReference type="HOGENOM" id="CLU_043022_0_0_6"/>
<dbReference type="OrthoDB" id="9804590at2"/>
<dbReference type="Proteomes" id="UP000001982">
    <property type="component" value="Chromosome"/>
</dbReference>
<dbReference type="GO" id="GO:0005829">
    <property type="term" value="C:cytosol"/>
    <property type="evidence" value="ECO:0007669"/>
    <property type="project" value="TreeGrafter"/>
</dbReference>
<dbReference type="GO" id="GO:0019843">
    <property type="term" value="F:rRNA binding"/>
    <property type="evidence" value="ECO:0007669"/>
    <property type="project" value="TreeGrafter"/>
</dbReference>
<dbReference type="GO" id="GO:0030697">
    <property type="term" value="F:tRNA (uracil(54)-C5)-methyltransferase activity, S-adenosyl methionine-dependent"/>
    <property type="evidence" value="ECO:0007669"/>
    <property type="project" value="UniProtKB-UniRule"/>
</dbReference>
<dbReference type="GO" id="GO:0000049">
    <property type="term" value="F:tRNA binding"/>
    <property type="evidence" value="ECO:0007669"/>
    <property type="project" value="TreeGrafter"/>
</dbReference>
<dbReference type="GO" id="GO:0030488">
    <property type="term" value="P:tRNA methylation"/>
    <property type="evidence" value="ECO:0007669"/>
    <property type="project" value="UniProtKB-UniRule"/>
</dbReference>
<dbReference type="CDD" id="cd02440">
    <property type="entry name" value="AdoMet_MTases"/>
    <property type="match status" value="1"/>
</dbReference>
<dbReference type="FunFam" id="2.40.50.1070:FF:000001">
    <property type="entry name" value="tRNA/tmRNA (uracil-C(5))-methyltransferase"/>
    <property type="match status" value="1"/>
</dbReference>
<dbReference type="FunFam" id="3.40.50.150:FF:000012">
    <property type="entry name" value="tRNA/tmRNA (uracil-C(5))-methyltransferase"/>
    <property type="match status" value="1"/>
</dbReference>
<dbReference type="Gene3D" id="2.40.50.1070">
    <property type="match status" value="1"/>
</dbReference>
<dbReference type="Gene3D" id="3.40.50.150">
    <property type="entry name" value="Vaccinia Virus protein VP39"/>
    <property type="match status" value="1"/>
</dbReference>
<dbReference type="HAMAP" id="MF_01011">
    <property type="entry name" value="RNA_methyltr_TrmA"/>
    <property type="match status" value="1"/>
</dbReference>
<dbReference type="InterPro" id="IPR030390">
    <property type="entry name" value="MeTrfase_TrmA_AS"/>
</dbReference>
<dbReference type="InterPro" id="IPR030391">
    <property type="entry name" value="MeTrfase_TrmA_CS"/>
</dbReference>
<dbReference type="InterPro" id="IPR029063">
    <property type="entry name" value="SAM-dependent_MTases_sf"/>
</dbReference>
<dbReference type="InterPro" id="IPR011869">
    <property type="entry name" value="TrmA_MeTrfase"/>
</dbReference>
<dbReference type="InterPro" id="IPR010280">
    <property type="entry name" value="U5_MeTrfase_fam"/>
</dbReference>
<dbReference type="NCBIfam" id="TIGR02143">
    <property type="entry name" value="trmA_only"/>
    <property type="match status" value="1"/>
</dbReference>
<dbReference type="PANTHER" id="PTHR47790">
    <property type="entry name" value="TRNA/TMRNA (URACIL-C(5))-METHYLTRANSFERASE"/>
    <property type="match status" value="1"/>
</dbReference>
<dbReference type="PANTHER" id="PTHR47790:SF2">
    <property type="entry name" value="TRNA_TMRNA (URACIL-C(5))-METHYLTRANSFERASE"/>
    <property type="match status" value="1"/>
</dbReference>
<dbReference type="Pfam" id="PF05958">
    <property type="entry name" value="tRNA_U5-meth_tr"/>
    <property type="match status" value="1"/>
</dbReference>
<dbReference type="SUPFAM" id="SSF53335">
    <property type="entry name" value="S-adenosyl-L-methionine-dependent methyltransferases"/>
    <property type="match status" value="1"/>
</dbReference>
<dbReference type="PROSITE" id="PS51687">
    <property type="entry name" value="SAM_MT_RNA_M5U"/>
    <property type="match status" value="1"/>
</dbReference>
<dbReference type="PROSITE" id="PS01230">
    <property type="entry name" value="TRMA_1"/>
    <property type="match status" value="1"/>
</dbReference>
<dbReference type="PROSITE" id="PS01231">
    <property type="entry name" value="TRMA_2"/>
    <property type="match status" value="1"/>
</dbReference>
<keyword id="KW-0489">Methyltransferase</keyword>
<keyword id="KW-1185">Reference proteome</keyword>
<keyword id="KW-0949">S-adenosyl-L-methionine</keyword>
<keyword id="KW-0808">Transferase</keyword>
<keyword id="KW-0819">tRNA processing</keyword>
<comment type="function">
    <text evidence="1">Dual-specificity methyltransferase that catalyzes the formation of 5-methyluridine at position 54 (m5U54) in all tRNAs, and that of position 341 (m5U341) in tmRNA (transfer-mRNA).</text>
</comment>
<comment type="catalytic activity">
    <reaction evidence="1">
        <text>uridine(54) in tRNA + S-adenosyl-L-methionine = 5-methyluridine(54) in tRNA + S-adenosyl-L-homocysteine + H(+)</text>
        <dbReference type="Rhea" id="RHEA:42712"/>
        <dbReference type="Rhea" id="RHEA-COMP:10167"/>
        <dbReference type="Rhea" id="RHEA-COMP:10193"/>
        <dbReference type="ChEBI" id="CHEBI:15378"/>
        <dbReference type="ChEBI" id="CHEBI:57856"/>
        <dbReference type="ChEBI" id="CHEBI:59789"/>
        <dbReference type="ChEBI" id="CHEBI:65315"/>
        <dbReference type="ChEBI" id="CHEBI:74447"/>
        <dbReference type="EC" id="2.1.1.35"/>
    </reaction>
</comment>
<comment type="catalytic activity">
    <reaction evidence="1">
        <text>uridine(341) in tmRNA + S-adenosyl-L-methionine = 5-methyluridine(341) in tmRNA + S-adenosyl-L-homocysteine + H(+)</text>
        <dbReference type="Rhea" id="RHEA:43612"/>
        <dbReference type="Rhea" id="RHEA-COMP:10630"/>
        <dbReference type="Rhea" id="RHEA-COMP:10631"/>
        <dbReference type="ChEBI" id="CHEBI:15378"/>
        <dbReference type="ChEBI" id="CHEBI:57856"/>
        <dbReference type="ChEBI" id="CHEBI:59789"/>
        <dbReference type="ChEBI" id="CHEBI:65315"/>
        <dbReference type="ChEBI" id="CHEBI:74447"/>
    </reaction>
</comment>
<comment type="similarity">
    <text evidence="1">Belongs to the class I-like SAM-binding methyltransferase superfamily. RNA M5U methyltransferase family. TrmA subfamily.</text>
</comment>
<reference key="1">
    <citation type="submission" date="2006-03" db="EMBL/GenBank/DDBJ databases">
        <title>Complete sequence of Shewanella denitrificans OS217.</title>
        <authorList>
            <consortium name="US DOE Joint Genome Institute"/>
            <person name="Copeland A."/>
            <person name="Lucas S."/>
            <person name="Lapidus A."/>
            <person name="Barry K."/>
            <person name="Detter J.C."/>
            <person name="Glavina del Rio T."/>
            <person name="Hammon N."/>
            <person name="Israni S."/>
            <person name="Dalin E."/>
            <person name="Tice H."/>
            <person name="Pitluck S."/>
            <person name="Brettin T."/>
            <person name="Bruce D."/>
            <person name="Han C."/>
            <person name="Tapia R."/>
            <person name="Gilna P."/>
            <person name="Kiss H."/>
            <person name="Schmutz J."/>
            <person name="Larimer F."/>
            <person name="Land M."/>
            <person name="Hauser L."/>
            <person name="Kyrpides N."/>
            <person name="Lykidis A."/>
            <person name="Richardson P."/>
        </authorList>
    </citation>
    <scope>NUCLEOTIDE SEQUENCE [LARGE SCALE GENOMIC DNA]</scope>
    <source>
        <strain>OS217 / ATCC BAA-1090 / DSM 15013</strain>
    </source>
</reference>
<gene>
    <name evidence="1" type="primary">trmA</name>
    <name type="ordered locus">Sden_0231</name>
</gene>
<name>TRMA_SHEDO</name>
<protein>
    <recommendedName>
        <fullName evidence="1">tRNA/tmRNA (uracil-C(5))-methyltransferase</fullName>
        <ecNumber evidence="1">2.1.1.-</ecNumber>
        <ecNumber evidence="1">2.1.1.35</ecNumber>
    </recommendedName>
    <alternativeName>
        <fullName evidence="1">tRNA (uracil(54)-C(5))-methyltransferase</fullName>
    </alternativeName>
    <alternativeName>
        <fullName evidence="1">tRNA(m5U54)-methyltransferase</fullName>
        <shortName evidence="1">RUMT</shortName>
    </alternativeName>
    <alternativeName>
        <fullName evidence="1">tmRNA (uracil(341)-C(5))-methyltransferase</fullName>
    </alternativeName>
</protein>